<name>Y2116_ANOFW</name>
<comment type="similarity">
    <text evidence="1">Belongs to the UPF0738 family.</text>
</comment>
<dbReference type="EMBL" id="CP000922">
    <property type="protein sequence ID" value="ACJ34475.1"/>
    <property type="molecule type" value="Genomic_DNA"/>
</dbReference>
<dbReference type="STRING" id="491915.Aflv_2116"/>
<dbReference type="KEGG" id="afl:Aflv_2116"/>
<dbReference type="eggNOG" id="ENOG5032YMN">
    <property type="taxonomic scope" value="Bacteria"/>
</dbReference>
<dbReference type="HOGENOM" id="CLU_142282_0_0_9"/>
<dbReference type="Proteomes" id="UP000000742">
    <property type="component" value="Chromosome"/>
</dbReference>
<dbReference type="HAMAP" id="MF_01861">
    <property type="entry name" value="UPF0738"/>
    <property type="match status" value="1"/>
</dbReference>
<dbReference type="InterPro" id="IPR020908">
    <property type="entry name" value="UPF0738"/>
</dbReference>
<dbReference type="Pfam" id="PF19785">
    <property type="entry name" value="UPF0738"/>
    <property type="match status" value="1"/>
</dbReference>
<feature type="chain" id="PRO_0000369635" description="UPF0738 protein Aflv_2116">
    <location>
        <begin position="1"/>
        <end position="135"/>
    </location>
</feature>
<evidence type="ECO:0000255" key="1">
    <source>
        <dbReference type="HAMAP-Rule" id="MF_01861"/>
    </source>
</evidence>
<organism>
    <name type="scientific">Anoxybacillus flavithermus (strain DSM 21510 / WK1)</name>
    <dbReference type="NCBI Taxonomy" id="491915"/>
    <lineage>
        <taxon>Bacteria</taxon>
        <taxon>Bacillati</taxon>
        <taxon>Bacillota</taxon>
        <taxon>Bacilli</taxon>
        <taxon>Bacillales</taxon>
        <taxon>Anoxybacillaceae</taxon>
        <taxon>Anoxybacillus</taxon>
    </lineage>
</organism>
<reference key="1">
    <citation type="journal article" date="2008" name="Genome Biol.">
        <title>Encapsulated in silica: genome, proteome and physiology of the thermophilic bacterium Anoxybacillus flavithermus WK1.</title>
        <authorList>
            <person name="Saw J.H."/>
            <person name="Mountain B.W."/>
            <person name="Feng L."/>
            <person name="Omelchenko M.V."/>
            <person name="Hou S."/>
            <person name="Saito J.A."/>
            <person name="Stott M.B."/>
            <person name="Li D."/>
            <person name="Zhao G."/>
            <person name="Wu J."/>
            <person name="Galperin M.Y."/>
            <person name="Koonin E.V."/>
            <person name="Makarova K.S."/>
            <person name="Wolf Y.I."/>
            <person name="Rigden D.J."/>
            <person name="Dunfield P.F."/>
            <person name="Wang L."/>
            <person name="Alam M."/>
        </authorList>
    </citation>
    <scope>NUCLEOTIDE SEQUENCE [LARGE SCALE GENOMIC DNA]</scope>
    <source>
        <strain>DSM 21510 / WK1</strain>
    </source>
</reference>
<sequence length="135" mass="15047">MKCGKIKADIMDDGGTNMKIYVHTAEKKENGWYFLCEASLQGLQAKRHMLVDSDACAFAYILEAADAFVYVIMPKEVWGAIKEALRTNEPVFLVGNDATIELEGIHEEVAYLIENIAGNANYGEEMEQAVTAFFE</sequence>
<accession>B7GLK6</accession>
<protein>
    <recommendedName>
        <fullName evidence="1">UPF0738 protein Aflv_2116</fullName>
    </recommendedName>
</protein>
<gene>
    <name type="ordered locus">Aflv_2116</name>
</gene>
<proteinExistence type="inferred from homology"/>